<feature type="chain" id="PRO_1000139290" description="Cyclic pyranopterin monophosphate synthase">
    <location>
        <begin position="1"/>
        <end position="161"/>
    </location>
</feature>
<feature type="active site" evidence="1">
    <location>
        <position position="128"/>
    </location>
</feature>
<feature type="binding site" evidence="1">
    <location>
        <begin position="75"/>
        <end position="77"/>
    </location>
    <ligand>
        <name>substrate</name>
    </ligand>
</feature>
<feature type="binding site" evidence="1">
    <location>
        <begin position="113"/>
        <end position="114"/>
    </location>
    <ligand>
        <name>substrate</name>
    </ligand>
</feature>
<organism>
    <name type="scientific">Salmonella dublin (strain CT_02021853)</name>
    <dbReference type="NCBI Taxonomy" id="439851"/>
    <lineage>
        <taxon>Bacteria</taxon>
        <taxon>Pseudomonadati</taxon>
        <taxon>Pseudomonadota</taxon>
        <taxon>Gammaproteobacteria</taxon>
        <taxon>Enterobacterales</taxon>
        <taxon>Enterobacteriaceae</taxon>
        <taxon>Salmonella</taxon>
    </lineage>
</organism>
<gene>
    <name evidence="1" type="primary">moaC</name>
    <name type="ordered locus">SeD_A0898</name>
</gene>
<sequence>MSQLTHINAAGEAHMVDVSAKAETVREARAEAFVTMRSETLAMIVDGKHHKGDVFATARIAGIQAAKRTWELIPLCHPLLLSKVEIQLQAEPEYNRVRIESLCRLTGKTGVEMEALTAASVAALTIYDMCKAVQKDMVIGPVRLLAKSGGKSGDFKVDAHD</sequence>
<protein>
    <recommendedName>
        <fullName evidence="1">Cyclic pyranopterin monophosphate synthase</fullName>
        <ecNumber evidence="1">4.6.1.17</ecNumber>
    </recommendedName>
    <alternativeName>
        <fullName evidence="1">Molybdenum cofactor biosynthesis protein C</fullName>
    </alternativeName>
</protein>
<keyword id="KW-0456">Lyase</keyword>
<keyword id="KW-0501">Molybdenum cofactor biosynthesis</keyword>
<evidence type="ECO:0000255" key="1">
    <source>
        <dbReference type="HAMAP-Rule" id="MF_01224"/>
    </source>
</evidence>
<name>MOAC_SALDC</name>
<accession>B5FP70</accession>
<comment type="function">
    <text evidence="1">Catalyzes the conversion of (8S)-3',8-cyclo-7,8-dihydroguanosine 5'-triphosphate to cyclic pyranopterin monophosphate (cPMP).</text>
</comment>
<comment type="catalytic activity">
    <reaction evidence="1">
        <text>(8S)-3',8-cyclo-7,8-dihydroguanosine 5'-triphosphate = cyclic pyranopterin phosphate + diphosphate</text>
        <dbReference type="Rhea" id="RHEA:49580"/>
        <dbReference type="ChEBI" id="CHEBI:33019"/>
        <dbReference type="ChEBI" id="CHEBI:59648"/>
        <dbReference type="ChEBI" id="CHEBI:131766"/>
        <dbReference type="EC" id="4.6.1.17"/>
    </reaction>
</comment>
<comment type="pathway">
    <text evidence="1">Cofactor biosynthesis; molybdopterin biosynthesis.</text>
</comment>
<comment type="subunit">
    <text evidence="1">Homohexamer; trimer of dimers.</text>
</comment>
<comment type="similarity">
    <text evidence="1">Belongs to the MoaC family.</text>
</comment>
<dbReference type="EC" id="4.6.1.17" evidence="1"/>
<dbReference type="EMBL" id="CP001144">
    <property type="protein sequence ID" value="ACH74973.1"/>
    <property type="molecule type" value="Genomic_DNA"/>
</dbReference>
<dbReference type="RefSeq" id="WP_000080897.1">
    <property type="nucleotide sequence ID" value="NC_011205.1"/>
</dbReference>
<dbReference type="SMR" id="B5FP70"/>
<dbReference type="KEGG" id="sed:SeD_A0898"/>
<dbReference type="HOGENOM" id="CLU_074693_1_1_6"/>
<dbReference type="UniPathway" id="UPA00344"/>
<dbReference type="Proteomes" id="UP000008322">
    <property type="component" value="Chromosome"/>
</dbReference>
<dbReference type="GO" id="GO:0061799">
    <property type="term" value="F:cyclic pyranopterin monophosphate synthase activity"/>
    <property type="evidence" value="ECO:0007669"/>
    <property type="project" value="UniProtKB-UniRule"/>
</dbReference>
<dbReference type="GO" id="GO:0061798">
    <property type="term" value="F:GTP 3',8'-cyclase activity"/>
    <property type="evidence" value="ECO:0007669"/>
    <property type="project" value="TreeGrafter"/>
</dbReference>
<dbReference type="GO" id="GO:0006777">
    <property type="term" value="P:Mo-molybdopterin cofactor biosynthetic process"/>
    <property type="evidence" value="ECO:0007669"/>
    <property type="project" value="UniProtKB-UniRule"/>
</dbReference>
<dbReference type="CDD" id="cd01420">
    <property type="entry name" value="MoaC_PE"/>
    <property type="match status" value="1"/>
</dbReference>
<dbReference type="FunFam" id="3.30.70.640:FF:000001">
    <property type="entry name" value="Cyclic pyranopterin monophosphate synthase"/>
    <property type="match status" value="1"/>
</dbReference>
<dbReference type="Gene3D" id="3.30.70.640">
    <property type="entry name" value="Molybdopterin cofactor biosynthesis C (MoaC) domain"/>
    <property type="match status" value="1"/>
</dbReference>
<dbReference type="HAMAP" id="MF_01224_B">
    <property type="entry name" value="MoaC_B"/>
    <property type="match status" value="1"/>
</dbReference>
<dbReference type="InterPro" id="IPR023045">
    <property type="entry name" value="MoaC"/>
</dbReference>
<dbReference type="InterPro" id="IPR047594">
    <property type="entry name" value="MoaC_bact/euk"/>
</dbReference>
<dbReference type="InterPro" id="IPR036522">
    <property type="entry name" value="MoaC_sf"/>
</dbReference>
<dbReference type="InterPro" id="IPR050105">
    <property type="entry name" value="MoCo_biosynth_MoaA/MoaC"/>
</dbReference>
<dbReference type="InterPro" id="IPR002820">
    <property type="entry name" value="Mopterin_CF_biosynth-C_dom"/>
</dbReference>
<dbReference type="NCBIfam" id="TIGR00581">
    <property type="entry name" value="moaC"/>
    <property type="match status" value="1"/>
</dbReference>
<dbReference type="NCBIfam" id="NF006870">
    <property type="entry name" value="PRK09364.1"/>
    <property type="match status" value="1"/>
</dbReference>
<dbReference type="PANTHER" id="PTHR22960:SF0">
    <property type="entry name" value="MOLYBDENUM COFACTOR BIOSYNTHESIS PROTEIN 1"/>
    <property type="match status" value="1"/>
</dbReference>
<dbReference type="PANTHER" id="PTHR22960">
    <property type="entry name" value="MOLYBDOPTERIN COFACTOR SYNTHESIS PROTEIN A"/>
    <property type="match status" value="1"/>
</dbReference>
<dbReference type="Pfam" id="PF01967">
    <property type="entry name" value="MoaC"/>
    <property type="match status" value="1"/>
</dbReference>
<dbReference type="SUPFAM" id="SSF55040">
    <property type="entry name" value="Molybdenum cofactor biosynthesis protein C, MoaC"/>
    <property type="match status" value="1"/>
</dbReference>
<proteinExistence type="inferred from homology"/>
<reference key="1">
    <citation type="journal article" date="2011" name="J. Bacteriol.">
        <title>Comparative genomics of 28 Salmonella enterica isolates: evidence for CRISPR-mediated adaptive sublineage evolution.</title>
        <authorList>
            <person name="Fricke W.F."/>
            <person name="Mammel M.K."/>
            <person name="McDermott P.F."/>
            <person name="Tartera C."/>
            <person name="White D.G."/>
            <person name="Leclerc J.E."/>
            <person name="Ravel J."/>
            <person name="Cebula T.A."/>
        </authorList>
    </citation>
    <scope>NUCLEOTIDE SEQUENCE [LARGE SCALE GENOMIC DNA]</scope>
    <source>
        <strain>CT_02021853</strain>
    </source>
</reference>